<feature type="chain" id="PRO_0000419371" description="Protein PA-X">
    <location>
        <begin position="1"/>
        <end position="252"/>
    </location>
</feature>
<feature type="region of interest" description="Disordered" evidence="6">
    <location>
        <begin position="202"/>
        <end position="221"/>
    </location>
</feature>
<feature type="compositionally biased region" description="Polar residues" evidence="6">
    <location>
        <begin position="207"/>
        <end position="217"/>
    </location>
</feature>
<feature type="active site" evidence="2">
    <location>
        <position position="80"/>
    </location>
</feature>
<feature type="active site" evidence="2">
    <location>
        <position position="108"/>
    </location>
</feature>
<feature type="site" description="Important for efficient shutoff activity" evidence="5">
    <location>
        <position position="28"/>
    </location>
</feature>
<feature type="site" description="Important for efficient shutoff activity" evidence="5">
    <location>
        <position position="65"/>
    </location>
</feature>
<feature type="site" description="Important for efficient shutoff activity and nuclear localization" evidence="4">
    <location>
        <position position="195"/>
    </location>
</feature>
<feature type="site" description="Important for efficient shutoff activity and nuclear localization" evidence="4">
    <location>
        <position position="198"/>
    </location>
</feature>
<feature type="site" description="Important for efficient shutoff activity and nuclear localization" evidence="4">
    <location>
        <position position="199"/>
    </location>
</feature>
<feature type="site" description="Important for efficient shutoff activity" evidence="3">
    <location>
        <position position="202"/>
    </location>
</feature>
<feature type="site" description="Important for efficient shutoff activity" evidence="3">
    <location>
        <position position="203"/>
    </location>
</feature>
<feature type="site" description="Important for efficient shutoff activity" evidence="3">
    <location>
        <position position="206"/>
    </location>
</feature>
<keyword id="KW-1132">Decay of host mRNAs by virus</keyword>
<keyword id="KW-1262">Eukaryotic host gene expression shutoff by virus</keyword>
<keyword id="KW-1035">Host cytoplasm</keyword>
<keyword id="KW-1190">Host gene expression shutoff by virus</keyword>
<keyword id="KW-1192">Host mRNA suppression by virus</keyword>
<keyword id="KW-1048">Host nucleus</keyword>
<keyword id="KW-0945">Host-virus interaction</keyword>
<keyword id="KW-0688">Ribosomal frameshifting</keyword>
<name>PAX_I47A0</name>
<proteinExistence type="inferred from homology"/>
<evidence type="ECO:0000250" key="1">
    <source>
        <dbReference type="UniProtKB" id="P0CK64"/>
    </source>
</evidence>
<evidence type="ECO:0000250" key="2">
    <source>
        <dbReference type="UniProtKB" id="P0CK68"/>
    </source>
</evidence>
<evidence type="ECO:0000250" key="3">
    <source>
        <dbReference type="UniProtKB" id="P0DJW8"/>
    </source>
</evidence>
<evidence type="ECO:0000250" key="4">
    <source>
        <dbReference type="UniProtKB" id="P0DXO5"/>
    </source>
</evidence>
<evidence type="ECO:0000250" key="5">
    <source>
        <dbReference type="UniProtKB" id="P0DXO6"/>
    </source>
</evidence>
<evidence type="ECO:0000256" key="6">
    <source>
        <dbReference type="SAM" id="MobiDB-lite"/>
    </source>
</evidence>
<evidence type="ECO:0000305" key="7"/>
<protein>
    <recommendedName>
        <fullName>Protein PA-X</fullName>
    </recommendedName>
</protein>
<reference key="1">
    <citation type="journal article" date="1996" name="Virus Res.">
        <title>Mutations in the hemagglutinin and matrix genes of a virulent influenza virus variant, A/FM/1/47-MA, control different stages in pathogenesis.</title>
        <authorList>
            <person name="Smeenk C.A."/>
            <person name="Wright K.E."/>
            <person name="Burns B.F."/>
            <person name="Thaker A.J."/>
            <person name="Brown E.G."/>
        </authorList>
    </citation>
    <scope>NUCLEOTIDE SEQUENCE [GENOMIC RNA]</scope>
</reference>
<sequence length="252" mass="29507">MEDFVRQCFNPMIVELAEKAMKEYGEDLKIETNKFAAICTHLEVCFMYSDFHFINEQGRSIIVELGDPNALLKHRFEIIEGRDRTMAWTVVNSICNTTGAEKPKFLPDLYDYKEDRFIEIGVTRREVHIYYLEKANKIKSEKTHIHIFSFTGEEMATKADYTLDEESRARIKTRLFTIRQEMASRGLWDSFVNPREAKRQLKKNLKSQEQCATSPTKVSRRTSPALRILEPMWMDSNRTATLRASFLKCPKK</sequence>
<organism>
    <name type="scientific">Influenza A virus (strain A/Fort Monmouth/1/1947 H1N1)</name>
    <dbReference type="NCBI Taxonomy" id="380282"/>
    <lineage>
        <taxon>Viruses</taxon>
        <taxon>Riboviria</taxon>
        <taxon>Orthornavirae</taxon>
        <taxon>Negarnaviricota</taxon>
        <taxon>Polyploviricotina</taxon>
        <taxon>Insthoviricetes</taxon>
        <taxon>Articulavirales</taxon>
        <taxon>Orthomyxoviridae</taxon>
        <taxon>Alphainfluenzavirus</taxon>
        <taxon>Alphainfluenzavirus influenzae</taxon>
        <taxon>Influenza A virus</taxon>
    </lineage>
</organism>
<dbReference type="EMBL" id="X99039">
    <property type="status" value="NOT_ANNOTATED_CDS"/>
    <property type="molecule type" value="Genomic_RNA"/>
</dbReference>
<dbReference type="EMBL" id="AJ238020">
    <property type="status" value="NOT_ANNOTATED_CDS"/>
    <property type="molecule type" value="Genomic_RNA"/>
</dbReference>
<dbReference type="SMR" id="P0CK88"/>
<dbReference type="GO" id="GO:0003723">
    <property type="term" value="F:RNA binding"/>
    <property type="evidence" value="ECO:0007669"/>
    <property type="project" value="InterPro"/>
</dbReference>
<dbReference type="GO" id="GO:0039694">
    <property type="term" value="P:viral RNA genome replication"/>
    <property type="evidence" value="ECO:0007669"/>
    <property type="project" value="InterPro"/>
</dbReference>
<dbReference type="GO" id="GO:0075523">
    <property type="term" value="P:viral translational frameshifting"/>
    <property type="evidence" value="ECO:0007669"/>
    <property type="project" value="UniProtKB-KW"/>
</dbReference>
<dbReference type="FunFam" id="3.40.91.90:FF:000001">
    <property type="entry name" value="Polymerase acidic protein"/>
    <property type="match status" value="1"/>
</dbReference>
<dbReference type="Gene3D" id="3.40.91.90">
    <property type="entry name" value="Influenza RNA-dependent RNA polymerase subunit PA, endonuclease domain"/>
    <property type="match status" value="1"/>
</dbReference>
<dbReference type="InterPro" id="IPR001009">
    <property type="entry name" value="PA/PA-X"/>
</dbReference>
<dbReference type="InterPro" id="IPR038372">
    <property type="entry name" value="PA/PA-X_sf"/>
</dbReference>
<dbReference type="Pfam" id="PF00603">
    <property type="entry name" value="Flu_PA"/>
    <property type="match status" value="1"/>
</dbReference>
<comment type="function">
    <text evidence="1 4">Plays a major role in the shutoff of the host protein expression by cleaving mRNAs probably via an endonuclease activity. This host shutoff allows the virus to escape from the host antiviral response (By similarity). Hijacks host RNA splicing machinery to selectively target host RNAs containing introns for destruction. This may explain the preferential degradation of RNAs that have undergone co- or post-transcriptional processing (By similarity).</text>
</comment>
<comment type="subcellular location">
    <subcellularLocation>
        <location evidence="4">Host cytoplasm</location>
    </subcellularLocation>
    <subcellularLocation>
        <location evidence="4">Host nucleus</location>
    </subcellularLocation>
</comment>
<comment type="alternative products">
    <event type="ribosomal frameshifting"/>
    <isoform>
        <id>P0CK88-1</id>
        <name>PA-X</name>
        <sequence type="displayed"/>
    </isoform>
    <isoform>
        <id>Q82570-1</id>
        <name>PA</name>
        <sequence type="external"/>
    </isoform>
</comment>
<comment type="domain">
    <text evidence="1 4">The probable endonuclease active site in the N-terminus and the basic amino acid cluster in the C-terminus are important for the shutoff activity. The C-terminus acts as a nuclear localization signal (By similarity). The C-terminus is recruited to host protein complexes involved in nuclear Pol II RNA processing (By similarity).</text>
</comment>
<comment type="similarity">
    <text evidence="7">Belongs to the influenza viruses PA-X family.</text>
</comment>
<accession>P0CK88</accession>
<organismHost>
    <name type="scientific">Aves</name>
    <dbReference type="NCBI Taxonomy" id="8782"/>
</organismHost>
<organismHost>
    <name type="scientific">Homo sapiens</name>
    <name type="common">Human</name>
    <dbReference type="NCBI Taxonomy" id="9606"/>
</organismHost>
<organismHost>
    <name type="scientific">Sus scrofa</name>
    <name type="common">Pig</name>
    <dbReference type="NCBI Taxonomy" id="9823"/>
</organismHost>
<gene>
    <name type="primary">PA</name>
</gene>